<keyword id="KW-0175">Coiled coil</keyword>
<keyword id="KW-1185">Reference proteome</keyword>
<proteinExistence type="predicted"/>
<feature type="chain" id="PRO_0000244007" description="Uncharacterized protein L792">
    <location>
        <begin position="1"/>
        <end position="228"/>
    </location>
</feature>
<feature type="coiled-coil region" evidence="1">
    <location>
        <begin position="196"/>
        <end position="228"/>
    </location>
</feature>
<reference key="1">
    <citation type="journal article" date="2004" name="Science">
        <title>The 1.2-megabase genome sequence of Mimivirus.</title>
        <authorList>
            <person name="Raoult D."/>
            <person name="Audic S."/>
            <person name="Robert C."/>
            <person name="Abergel C."/>
            <person name="Renesto P."/>
            <person name="Ogata H."/>
            <person name="La Scola B."/>
            <person name="Susan M."/>
            <person name="Claverie J.-M."/>
        </authorList>
    </citation>
    <scope>NUCLEOTIDE SEQUENCE [LARGE SCALE GENOMIC DNA]</scope>
    <source>
        <strain>Rowbotham-Bradford</strain>
    </source>
</reference>
<organismHost>
    <name type="scientific">Acanthamoeba polyphaga</name>
    <name type="common">Amoeba</name>
    <dbReference type="NCBI Taxonomy" id="5757"/>
</organismHost>
<organism>
    <name type="scientific">Acanthamoeba polyphaga mimivirus</name>
    <name type="common">APMV</name>
    <dbReference type="NCBI Taxonomy" id="212035"/>
    <lineage>
        <taxon>Viruses</taxon>
        <taxon>Varidnaviria</taxon>
        <taxon>Bamfordvirae</taxon>
        <taxon>Nucleocytoviricota</taxon>
        <taxon>Megaviricetes</taxon>
        <taxon>Imitervirales</taxon>
        <taxon>Mimiviridae</taxon>
        <taxon>Megamimivirinae</taxon>
        <taxon>Mimivirus</taxon>
        <taxon>Mimivirus bradfordmassiliense</taxon>
    </lineage>
</organism>
<gene>
    <name type="ordered locus">MIMI_L792</name>
</gene>
<protein>
    <recommendedName>
        <fullName>Uncharacterized protein L792</fullName>
    </recommendedName>
</protein>
<evidence type="ECO:0000255" key="1"/>
<accession>Q5UQ03</accession>
<dbReference type="EMBL" id="AY653733">
    <property type="protein sequence ID" value="AAV51052.1"/>
    <property type="molecule type" value="Genomic_DNA"/>
</dbReference>
<dbReference type="SMR" id="Q5UQ03"/>
<dbReference type="KEGG" id="vg:9925453"/>
<dbReference type="OrthoDB" id="29082at10239"/>
<dbReference type="Proteomes" id="UP000001134">
    <property type="component" value="Genome"/>
</dbReference>
<sequence>MSLYWTMFGHPSEQDIDEIESWFDWPISVYDFPRFRDVNVNSENPIIKVTTRSGGGNREEYEENNEYVSLLEGFICDKDASWDSTYAIFKYKIPDRSLDKWREYIERKKLELKKSQQISTKKINEDDENNKDNIDNNSASTIVDEFMKAFTKIHENIETEKILQNTDKSFSNTREIEFKQPSQEQSQQQLSNECVVKITELLDKAKISINDLNKTIEKLNETVNKYHG</sequence>
<name>YL792_MIMIV</name>